<gene>
    <name type="primary">Cd24</name>
    <name type="synonym">Cd24a</name>
    <name type="synonym">Ly-52</name>
</gene>
<name>CD24_MOUSE</name>
<organism>
    <name type="scientific">Mus musculus</name>
    <name type="common">Mouse</name>
    <dbReference type="NCBI Taxonomy" id="10090"/>
    <lineage>
        <taxon>Eukaryota</taxon>
        <taxon>Metazoa</taxon>
        <taxon>Chordata</taxon>
        <taxon>Craniata</taxon>
        <taxon>Vertebrata</taxon>
        <taxon>Euteleostomi</taxon>
        <taxon>Mammalia</taxon>
        <taxon>Eutheria</taxon>
        <taxon>Euarchontoglires</taxon>
        <taxon>Glires</taxon>
        <taxon>Rodentia</taxon>
        <taxon>Myomorpha</taxon>
        <taxon>Muroidea</taxon>
        <taxon>Muridae</taxon>
        <taxon>Murinae</taxon>
        <taxon>Mus</taxon>
        <taxon>Mus</taxon>
    </lineage>
</organism>
<feature type="signal peptide" evidence="4">
    <location>
        <begin position="1"/>
        <end position="26"/>
    </location>
</feature>
<feature type="peptide" id="PRO_0000020895" description="Signal transducer CD24">
    <location>
        <begin position="27"/>
        <end position="53"/>
    </location>
</feature>
<feature type="propeptide" id="PRO_0000020896" description="Removed in mature form" evidence="2">
    <location>
        <begin position="54"/>
        <end position="76"/>
    </location>
</feature>
<feature type="region of interest" description="Disordered" evidence="3">
    <location>
        <begin position="37"/>
        <end position="57"/>
    </location>
</feature>
<feature type="compositionally biased region" description="Polar residues" evidence="3">
    <location>
        <begin position="37"/>
        <end position="51"/>
    </location>
</feature>
<feature type="site" description="Not glycosylated" evidence="4">
    <location>
        <position position="45"/>
    </location>
</feature>
<feature type="lipid moiety-binding region" description="GPI-anchor amidated glycine" evidence="2">
    <location>
        <position position="53"/>
    </location>
</feature>
<feature type="glycosylation site" description="N-linked (GlcNAc...) asparagine" evidence="4">
    <location>
        <position position="27"/>
    </location>
</feature>
<feature type="glycosylation site" description="O-linked (GalNAc...) serine" evidence="4">
    <location>
        <position position="30"/>
    </location>
</feature>
<feature type="glycosylation site" description="N-linked (GlcNAc...) asparagine" evidence="4">
    <location>
        <position position="39"/>
    </location>
</feature>
<feature type="glycosylation site" description="O-linked (GalNAc...) serine; partial" evidence="4">
    <location>
        <position position="41"/>
    </location>
</feature>
<feature type="glycosylation site" description="O-linked (GalNAc...) serine; partial" evidence="4">
    <location>
        <position position="43"/>
    </location>
</feature>
<feature type="glycosylation site" description="N-linked (GlcNAc...) asparagine" evidence="4">
    <location>
        <position position="48"/>
    </location>
</feature>
<feature type="glycosylation site" description="O-linked (GalNAc...) threonine; partial" evidence="4">
    <location>
        <position position="51"/>
    </location>
</feature>
<evidence type="ECO:0000250" key="1">
    <source>
        <dbReference type="UniProtKB" id="P25063"/>
    </source>
</evidence>
<evidence type="ECO:0000255" key="2"/>
<evidence type="ECO:0000256" key="3">
    <source>
        <dbReference type="SAM" id="MobiDB-lite"/>
    </source>
</evidence>
<evidence type="ECO:0000269" key="4">
    <source>
    </source>
</evidence>
<evidence type="ECO:0000269" key="5">
    <source>
    </source>
</evidence>
<evidence type="ECO:0000269" key="6">
    <source>
    </source>
</evidence>
<evidence type="ECO:0000305" key="7"/>
<reference key="1">
    <citation type="journal article" date="1990" name="J. Immunol.">
        <title>Expression cloning of a cDNA encoding M1/69-J11d heat-stable antigens.</title>
        <authorList>
            <person name="Kay R."/>
            <person name="Takei F."/>
            <person name="Humphries R.K."/>
        </authorList>
    </citation>
    <scope>NUCLEOTIDE SEQUENCE [MRNA]</scope>
</reference>
<reference key="2">
    <citation type="journal article" date="1991" name="Eur. J. Immunol.">
        <title>The genes for a mouse hematopoietic differentiation marker called the heat-stable antigen.</title>
        <authorList>
            <person name="Wenger R.H."/>
            <person name="Ayane M."/>
            <person name="Bose R."/>
            <person name="Koehler G."/>
            <person name="Nielsen P.J."/>
        </authorList>
    </citation>
    <scope>NUCLEOTIDE SEQUENCE</scope>
    <source>
        <strain>C57BL/6 X CBA</strain>
        <strain>Swiss albino X BALB/c</strain>
        <tissue>Spleen</tissue>
    </source>
</reference>
<reference key="3">
    <citation type="submission" date="1992-07" db="EMBL/GenBank/DDBJ databases">
        <authorList>
            <person name="Nielsen P.J."/>
        </authorList>
    </citation>
    <scope>SEQUENCE REVISION</scope>
</reference>
<reference key="4">
    <citation type="journal article" date="1993" name="J. Biol. Chem.">
        <title>The heat stable antigen (mouse CD24) gene is differentially regulated but has a housekeeping promoter.</title>
        <authorList>
            <person name="Wenger R.H."/>
            <person name="Rochelle J.M."/>
            <person name="Seldin M.F."/>
            <person name="Koehler G."/>
            <person name="Nielsen P.J."/>
        </authorList>
    </citation>
    <scope>NUCLEOTIDE SEQUENCE [GENOMIC DNA]</scope>
    <source>
        <strain>C57BL/6 X CBA</strain>
        <tissue>Spleen</tissue>
    </source>
</reference>
<reference key="5">
    <citation type="journal article" date="2004" name="Genome Res.">
        <title>The status, quality, and expansion of the NIH full-length cDNA project: the Mammalian Gene Collection (MGC).</title>
        <authorList>
            <consortium name="The MGC Project Team"/>
        </authorList>
    </citation>
    <scope>NUCLEOTIDE SEQUENCE [LARGE SCALE MRNA]</scope>
    <source>
        <strain>C57BL/6J</strain>
        <tissue>Brain</tissue>
    </source>
</reference>
<reference key="6">
    <citation type="journal article" date="1992" name="Biochem. Biophys. Res. Commun.">
        <title>Purification of the murine heat-stable antigen from erythrocytes.</title>
        <authorList>
            <person name="Hitsumoto Y."/>
            <person name="Nakano A."/>
            <person name="Ohnishi H."/>
            <person name="Hamada F."/>
            <person name="Saheki S."/>
            <person name="Takeuchi N."/>
        </authorList>
    </citation>
    <scope>PROTEIN SEQUENCE OF 27-53</scope>
    <scope>GLYCOSYLATION AT ASN-27; SER-30; ASN-39; SER-41; SER-43; ASN-48 AND THR-51</scope>
    <source>
        <strain>C57BL/6J</strain>
    </source>
</reference>
<reference key="7">
    <citation type="journal article" date="2009" name="Science">
        <title>CD24 and Siglec-10 selectively repress tissue damage-induced immune responses.</title>
        <authorList>
            <person name="Chen G.Y."/>
            <person name="Tang J."/>
            <person name="Zheng P."/>
            <person name="Liu Y."/>
        </authorList>
    </citation>
    <scope>FUNCTION</scope>
    <scope>INTERACTION WITH SIGLEC10 AND HMGB1</scope>
</reference>
<reference key="8">
    <citation type="journal article" date="2010" name="J. Immunol.">
        <title>CD22 x Siglec-G double-deficient mice have massively increased B1 cell numbers and develop systemic autoimmunity.</title>
        <authorList>
            <person name="Jellusova J."/>
            <person name="Wellmann U."/>
            <person name="Amann K."/>
            <person name="Winkler T.H."/>
            <person name="Nitschke L."/>
        </authorList>
    </citation>
    <scope>FUNCTION</scope>
    <scope>DISRUPTION PHENOTYPE</scope>
</reference>
<comment type="function">
    <text evidence="1 5 6">May have a pivotal role in cell differentiation of different cell types. May have a specific role in early thymocyte development. Signaling could be triggered by the binding of a lectin-like ligand to the CD24 carbohydrates, and transduced by the release of second messengers derived from the GPI-anchor. Modulates B-cell activation responses (By similarity). In association with SIGLEC10 may be involved in the selective suppression of the immune response to danger-associated molecular patterns (DAMPs) such as HMGB1, HSP70 and HSP90 (PubMed:19264983). Plays a role in the control of autoimmunity (PubMed:20200274).</text>
</comment>
<comment type="subunit">
    <text evidence="5">Interacts with SIGLEC10; the probable CD24:SIGLEC10 complex is proposed to inhibit HGMB1-mediated tissue damage immune response.</text>
</comment>
<comment type="subcellular location">
    <subcellularLocation>
        <location>Cell membrane</location>
        <topology>Lipid-anchor</topology>
        <topology>GPI-anchor</topology>
    </subcellularLocation>
</comment>
<comment type="tissue specificity">
    <text>In lymphoid, myeloid, and erythroid cells.</text>
</comment>
<comment type="PTM">
    <text evidence="4">The identity of the N- and O-linked polysaccharides is not reported in PubMed:1530634. The O-linked polysaccharides on Ser-30, Ser-41, Ser-43, and Thr-51 are probably the mucin type linked to GalNAc.</text>
</comment>
<comment type="disruption phenotype">
    <text evidence="6">Cd22/Siglec10 double-deficient mice develop autoimmune disease, which is not observed in single-deficient mice.</text>
</comment>
<comment type="similarity">
    <text evidence="7">Belongs to the CD24 family.</text>
</comment>
<dbReference type="EMBL" id="M58661">
    <property type="protein sequence ID" value="AAA39481.1"/>
    <property type="molecule type" value="mRNA"/>
</dbReference>
<dbReference type="EMBL" id="X56469">
    <property type="protein sequence ID" value="CAA39841.1"/>
    <property type="molecule type" value="Genomic_DNA"/>
</dbReference>
<dbReference type="EMBL" id="X72910">
    <property type="protein sequence ID" value="CAA51415.1"/>
    <property type="molecule type" value="Genomic_DNA"/>
</dbReference>
<dbReference type="EMBL" id="X53825">
    <property type="protein sequence ID" value="CAA37822.1"/>
    <property type="molecule type" value="mRNA"/>
</dbReference>
<dbReference type="EMBL" id="BC075622">
    <property type="protein sequence ID" value="AAH75622.1"/>
    <property type="molecule type" value="mRNA"/>
</dbReference>
<dbReference type="CCDS" id="CCDS23821.1"/>
<dbReference type="PIR" id="A43537">
    <property type="entry name" value="A43537"/>
</dbReference>
<dbReference type="RefSeq" id="NP_033976.1">
    <property type="nucleotide sequence ID" value="NM_009846.2"/>
</dbReference>
<dbReference type="BioGRID" id="198582">
    <property type="interactions" value="1"/>
</dbReference>
<dbReference type="FunCoup" id="P24807">
    <property type="interactions" value="90"/>
</dbReference>
<dbReference type="STRING" id="10090.ENSMUSP00000057983"/>
<dbReference type="GlyCosmos" id="P24807">
    <property type="glycosylation" value="7 sites, No reported glycans"/>
</dbReference>
<dbReference type="GlyGen" id="P24807">
    <property type="glycosylation" value="7 sites"/>
</dbReference>
<dbReference type="iPTMnet" id="P24807"/>
<dbReference type="PaxDb" id="10090-ENSMUSP00000057983"/>
<dbReference type="DNASU" id="12484"/>
<dbReference type="Ensembl" id="ENSMUST00000058714.10">
    <property type="protein sequence ID" value="ENSMUSP00000057983.9"/>
    <property type="gene ID" value="ENSMUSG00000047139.10"/>
</dbReference>
<dbReference type="GeneID" id="12484"/>
<dbReference type="KEGG" id="mmu:12484"/>
<dbReference type="UCSC" id="uc007ezl.1">
    <property type="organism name" value="mouse"/>
</dbReference>
<dbReference type="AGR" id="MGI:88323"/>
<dbReference type="CTD" id="12484"/>
<dbReference type="MGI" id="MGI:88323">
    <property type="gene designation" value="Cd24a"/>
</dbReference>
<dbReference type="VEuPathDB" id="HostDB:ENSMUSG00000047139"/>
<dbReference type="eggNOG" id="ENOG502RVSX">
    <property type="taxonomic scope" value="Eukaryota"/>
</dbReference>
<dbReference type="GeneTree" id="ENSGT00390000018829"/>
<dbReference type="HOGENOM" id="CLU_198463_1_0_1"/>
<dbReference type="InParanoid" id="P24807"/>
<dbReference type="OMA" id="TTKGHGN"/>
<dbReference type="OrthoDB" id="9633891at2759"/>
<dbReference type="PhylomeDB" id="P24807"/>
<dbReference type="TreeFam" id="TF338512"/>
<dbReference type="BioGRID-ORCS" id="12484">
    <property type="hits" value="1 hit in 78 CRISPR screens"/>
</dbReference>
<dbReference type="ChiTaRS" id="Cd24a">
    <property type="organism name" value="mouse"/>
</dbReference>
<dbReference type="PRO" id="PR:P24807"/>
<dbReference type="Proteomes" id="UP000000589">
    <property type="component" value="Chromosome 10"/>
</dbReference>
<dbReference type="RNAct" id="P24807">
    <property type="molecule type" value="protein"/>
</dbReference>
<dbReference type="Bgee" id="ENSMUSG00000047139">
    <property type="expression patterns" value="Expressed in fetal liver hematopoietic progenitor cell and 299 other cell types or tissues"/>
</dbReference>
<dbReference type="ExpressionAtlas" id="P24807">
    <property type="expression patterns" value="baseline and differential"/>
</dbReference>
<dbReference type="GO" id="GO:0009986">
    <property type="term" value="C:cell surface"/>
    <property type="evidence" value="ECO:0000314"/>
    <property type="project" value="MGI"/>
</dbReference>
<dbReference type="GO" id="GO:0060170">
    <property type="term" value="C:ciliary membrane"/>
    <property type="evidence" value="ECO:0000314"/>
    <property type="project" value="MGI"/>
</dbReference>
<dbReference type="GO" id="GO:0009897">
    <property type="term" value="C:external side of plasma membrane"/>
    <property type="evidence" value="ECO:0000314"/>
    <property type="project" value="MGI"/>
</dbReference>
<dbReference type="GO" id="GO:0016020">
    <property type="term" value="C:membrane"/>
    <property type="evidence" value="ECO:0000314"/>
    <property type="project" value="MGI"/>
</dbReference>
<dbReference type="GO" id="GO:0045121">
    <property type="term" value="C:membrane raft"/>
    <property type="evidence" value="ECO:0000314"/>
    <property type="project" value="UniProtKB"/>
</dbReference>
<dbReference type="GO" id="GO:0031528">
    <property type="term" value="C:microvillus membrane"/>
    <property type="evidence" value="ECO:0000314"/>
    <property type="project" value="MGI"/>
</dbReference>
<dbReference type="GO" id="GO:0031514">
    <property type="term" value="C:motile cilium"/>
    <property type="evidence" value="ECO:0000314"/>
    <property type="project" value="MGI"/>
</dbReference>
<dbReference type="GO" id="GO:0005886">
    <property type="term" value="C:plasma membrane"/>
    <property type="evidence" value="ECO:0000314"/>
    <property type="project" value="MGI"/>
</dbReference>
<dbReference type="GO" id="GO:0098793">
    <property type="term" value="C:presynapse"/>
    <property type="evidence" value="ECO:0007669"/>
    <property type="project" value="GOC"/>
</dbReference>
<dbReference type="GO" id="GO:0030246">
    <property type="term" value="F:carbohydrate binding"/>
    <property type="evidence" value="ECO:0000314"/>
    <property type="project" value="UniProtKB"/>
</dbReference>
<dbReference type="GO" id="GO:0030544">
    <property type="term" value="F:Hsp70 protein binding"/>
    <property type="evidence" value="ECO:0000314"/>
    <property type="project" value="UniProtKB"/>
</dbReference>
<dbReference type="GO" id="GO:0051879">
    <property type="term" value="F:Hsp90 protein binding"/>
    <property type="evidence" value="ECO:0000314"/>
    <property type="project" value="UniProtKB"/>
</dbReference>
<dbReference type="GO" id="GO:0019901">
    <property type="term" value="F:protein kinase binding"/>
    <property type="evidence" value="ECO:0000250"/>
    <property type="project" value="UniProtKB"/>
</dbReference>
<dbReference type="GO" id="GO:0030296">
    <property type="term" value="F:protein tyrosine kinase activator activity"/>
    <property type="evidence" value="ECO:0000250"/>
    <property type="project" value="UniProtKB"/>
</dbReference>
<dbReference type="GO" id="GO:0008637">
    <property type="term" value="P:apoptotic mitochondrial changes"/>
    <property type="evidence" value="ECO:0000314"/>
    <property type="project" value="MGI"/>
</dbReference>
<dbReference type="GO" id="GO:0030262">
    <property type="term" value="P:apoptotic nuclear changes"/>
    <property type="evidence" value="ECO:0000314"/>
    <property type="project" value="MGI"/>
</dbReference>
<dbReference type="GO" id="GO:0097190">
    <property type="term" value="P:apoptotic signaling pathway"/>
    <property type="evidence" value="ECO:0000314"/>
    <property type="project" value="MGI"/>
</dbReference>
<dbReference type="GO" id="GO:0001783">
    <property type="term" value="P:B cell apoptotic process"/>
    <property type="evidence" value="ECO:0000314"/>
    <property type="project" value="MGI"/>
</dbReference>
<dbReference type="GO" id="GO:0042100">
    <property type="term" value="P:B cell proliferation"/>
    <property type="evidence" value="ECO:0000314"/>
    <property type="project" value="MGI"/>
</dbReference>
<dbReference type="GO" id="GO:0032597">
    <property type="term" value="P:B cell receptor transport into membrane raft"/>
    <property type="evidence" value="ECO:0000250"/>
    <property type="project" value="UniProtKB"/>
</dbReference>
<dbReference type="GO" id="GO:0019722">
    <property type="term" value="P:calcium-mediated signaling"/>
    <property type="evidence" value="ECO:0000314"/>
    <property type="project" value="MGI"/>
</dbReference>
<dbReference type="GO" id="GO:0035739">
    <property type="term" value="P:CD4-positive, alpha-beta T cell proliferation"/>
    <property type="evidence" value="ECO:0000314"/>
    <property type="project" value="MGI"/>
</dbReference>
<dbReference type="GO" id="GO:0001775">
    <property type="term" value="P:cell activation"/>
    <property type="evidence" value="ECO:0000250"/>
    <property type="project" value="UniProtKB"/>
</dbReference>
<dbReference type="GO" id="GO:0016477">
    <property type="term" value="P:cell migration"/>
    <property type="evidence" value="ECO:0000315"/>
    <property type="project" value="UniProtKB"/>
</dbReference>
<dbReference type="GO" id="GO:0007166">
    <property type="term" value="P:cell surface receptor signaling pathway"/>
    <property type="evidence" value="ECO:0000314"/>
    <property type="project" value="MGI"/>
</dbReference>
<dbReference type="GO" id="GO:0032600">
    <property type="term" value="P:chemokine receptor transport out of membrane raft"/>
    <property type="evidence" value="ECO:0000315"/>
    <property type="project" value="UniProtKB"/>
</dbReference>
<dbReference type="GO" id="GO:0042632">
    <property type="term" value="P:cholesterol homeostasis"/>
    <property type="evidence" value="ECO:0000315"/>
    <property type="project" value="UniProtKB"/>
</dbReference>
<dbReference type="GO" id="GO:0072139">
    <property type="term" value="P:glomerular parietal epithelial cell differentiation"/>
    <property type="evidence" value="ECO:0000250"/>
    <property type="project" value="UniProtKB"/>
</dbReference>
<dbReference type="GO" id="GO:0007157">
    <property type="term" value="P:heterophilic cell-cell adhesion via plasma membrane cell adhesion molecules"/>
    <property type="evidence" value="ECO:0000314"/>
    <property type="project" value="MGI"/>
</dbReference>
<dbReference type="GO" id="GO:0034109">
    <property type="term" value="P:homotypic cell-cell adhesion"/>
    <property type="evidence" value="ECO:0000315"/>
    <property type="project" value="MGI"/>
</dbReference>
<dbReference type="GO" id="GO:0045087">
    <property type="term" value="P:innate immune response"/>
    <property type="evidence" value="ECO:0007669"/>
    <property type="project" value="UniProtKB-KW"/>
</dbReference>
<dbReference type="GO" id="GO:0033622">
    <property type="term" value="P:integrin activation"/>
    <property type="evidence" value="ECO:0000314"/>
    <property type="project" value="MGI"/>
</dbReference>
<dbReference type="GO" id="GO:0007159">
    <property type="term" value="P:leukocyte cell-cell adhesion"/>
    <property type="evidence" value="ECO:0000314"/>
    <property type="project" value="MGI"/>
</dbReference>
<dbReference type="GO" id="GO:0002523">
    <property type="term" value="P:leukocyte migration involved in inflammatory response"/>
    <property type="evidence" value="ECO:0000315"/>
    <property type="project" value="MGI"/>
</dbReference>
<dbReference type="GO" id="GO:0030889">
    <property type="term" value="P:negative regulation of B cell proliferation"/>
    <property type="evidence" value="ECO:0000314"/>
    <property type="project" value="MGI"/>
</dbReference>
<dbReference type="GO" id="GO:0034119">
    <property type="term" value="P:negative regulation of erythrocyte aggregation"/>
    <property type="evidence" value="ECO:0000315"/>
    <property type="project" value="MGI"/>
</dbReference>
<dbReference type="GO" id="GO:0034107">
    <property type="term" value="P:negative regulation of erythrocyte clearance"/>
    <property type="evidence" value="ECO:0000315"/>
    <property type="project" value="MGI"/>
</dbReference>
<dbReference type="GO" id="GO:0106015">
    <property type="term" value="P:negative regulation of inflammatory response to wounding"/>
    <property type="evidence" value="ECO:0000353"/>
    <property type="project" value="UniProtKB"/>
</dbReference>
<dbReference type="GO" id="GO:0032715">
    <property type="term" value="P:negative regulation of interleukin-6 production"/>
    <property type="evidence" value="ECO:0000315"/>
    <property type="project" value="UniProtKB"/>
</dbReference>
<dbReference type="GO" id="GO:0071638">
    <property type="term" value="P:negative regulation of monocyte chemotactic protein-1 production"/>
    <property type="evidence" value="ECO:0000315"/>
    <property type="project" value="UniProtKB"/>
</dbReference>
<dbReference type="GO" id="GO:0007406">
    <property type="term" value="P:negative regulation of neuroblast proliferation"/>
    <property type="evidence" value="ECO:0000315"/>
    <property type="project" value="MGI"/>
</dbReference>
<dbReference type="GO" id="GO:0050768">
    <property type="term" value="P:negative regulation of neurogenesis"/>
    <property type="evidence" value="ECO:0000315"/>
    <property type="project" value="MGI"/>
</dbReference>
<dbReference type="GO" id="GO:0045665">
    <property type="term" value="P:negative regulation of neuron differentiation"/>
    <property type="evidence" value="ECO:0000315"/>
    <property type="project" value="MGI"/>
</dbReference>
<dbReference type="GO" id="GO:0046014">
    <property type="term" value="P:negative regulation of T cell homeostatic proliferation"/>
    <property type="evidence" value="ECO:0000315"/>
    <property type="project" value="MGI"/>
</dbReference>
<dbReference type="GO" id="GO:0032913">
    <property type="term" value="P:negative regulation of transforming growth factor beta3 production"/>
    <property type="evidence" value="ECO:0000250"/>
    <property type="project" value="UniProtKB"/>
</dbReference>
<dbReference type="GO" id="GO:0032720">
    <property type="term" value="P:negative regulation of tumor necrosis factor production"/>
    <property type="evidence" value="ECO:0000315"/>
    <property type="project" value="UniProtKB"/>
</dbReference>
<dbReference type="GO" id="GO:0007405">
    <property type="term" value="P:neuroblast proliferation"/>
    <property type="evidence" value="ECO:0000315"/>
    <property type="project" value="MGI"/>
</dbReference>
<dbReference type="GO" id="GO:0007274">
    <property type="term" value="P:neuromuscular synaptic transmission"/>
    <property type="evidence" value="ECO:0000315"/>
    <property type="project" value="MGI"/>
</dbReference>
<dbReference type="GO" id="GO:0031175">
    <property type="term" value="P:neuron projection development"/>
    <property type="evidence" value="ECO:0000314"/>
    <property type="project" value="MGI"/>
</dbReference>
<dbReference type="GO" id="GO:0072112">
    <property type="term" value="P:podocyte differentiation"/>
    <property type="evidence" value="ECO:0000250"/>
    <property type="project" value="UniProtKB"/>
</dbReference>
<dbReference type="GO" id="GO:0042104">
    <property type="term" value="P:positive regulation of activated T cell proliferation"/>
    <property type="evidence" value="ECO:0000250"/>
    <property type="project" value="UniProtKB"/>
</dbReference>
<dbReference type="GO" id="GO:0046641">
    <property type="term" value="P:positive regulation of alpha-beta T cell proliferation"/>
    <property type="evidence" value="ECO:0000314"/>
    <property type="project" value="MGI"/>
</dbReference>
<dbReference type="GO" id="GO:0002904">
    <property type="term" value="P:positive regulation of B cell apoptotic process"/>
    <property type="evidence" value="ECO:0000314"/>
    <property type="project" value="MGI"/>
</dbReference>
<dbReference type="GO" id="GO:0050850">
    <property type="term" value="P:positive regulation of calcium-mediated signaling"/>
    <property type="evidence" value="ECO:0000314"/>
    <property type="project" value="MGI"/>
</dbReference>
<dbReference type="GO" id="GO:2000563">
    <property type="term" value="P:positive regulation of CD4-positive, alpha-beta T cell proliferation"/>
    <property type="evidence" value="ECO:0000314"/>
    <property type="project" value="MGI"/>
</dbReference>
<dbReference type="GO" id="GO:0033630">
    <property type="term" value="P:positive regulation of cell adhesion mediated by integrin"/>
    <property type="evidence" value="ECO:0000314"/>
    <property type="project" value="MGI"/>
</dbReference>
<dbReference type="GO" id="GO:0022409">
    <property type="term" value="P:positive regulation of cell-cell adhesion"/>
    <property type="evidence" value="ECO:0000314"/>
    <property type="project" value="MGI"/>
</dbReference>
<dbReference type="GO" id="GO:0033634">
    <property type="term" value="P:positive regulation of cell-cell adhesion mediated by integrin"/>
    <property type="evidence" value="ECO:0000314"/>
    <property type="project" value="MGI"/>
</dbReference>
<dbReference type="GO" id="GO:0007204">
    <property type="term" value="P:positive regulation of cytosolic calcium ion concentration"/>
    <property type="evidence" value="ECO:0000250"/>
    <property type="project" value="UniProtKB"/>
</dbReference>
<dbReference type="GO" id="GO:0002863">
    <property type="term" value="P:positive regulation of inflammatory response to antigenic stimulus"/>
    <property type="evidence" value="ECO:0000315"/>
    <property type="project" value="MGI"/>
</dbReference>
<dbReference type="GO" id="GO:0106016">
    <property type="term" value="P:positive regulation of inflammatory response to wounding"/>
    <property type="evidence" value="ECO:0000315"/>
    <property type="project" value="UniProtKB"/>
</dbReference>
<dbReference type="GO" id="GO:0033625">
    <property type="term" value="P:positive regulation of integrin activation"/>
    <property type="evidence" value="ECO:0000314"/>
    <property type="project" value="MGI"/>
</dbReference>
<dbReference type="GO" id="GO:2000768">
    <property type="term" value="P:positive regulation of nephron tubule epithelial cell differentiation"/>
    <property type="evidence" value="ECO:0000250"/>
    <property type="project" value="UniProtKB"/>
</dbReference>
<dbReference type="GO" id="GO:0010976">
    <property type="term" value="P:positive regulation of neuron projection development"/>
    <property type="evidence" value="ECO:0000314"/>
    <property type="project" value="MGI"/>
</dbReference>
<dbReference type="GO" id="GO:0042103">
    <property type="term" value="P:positive regulation of T cell homeostatic proliferation"/>
    <property type="evidence" value="ECO:0000315"/>
    <property type="project" value="MGI"/>
</dbReference>
<dbReference type="GO" id="GO:0002842">
    <property type="term" value="P:positive regulation of T cell mediated immune response to tumor cell"/>
    <property type="evidence" value="ECO:0000314"/>
    <property type="project" value="MGI"/>
</dbReference>
<dbReference type="GO" id="GO:0002329">
    <property type="term" value="P:pre-B cell differentiation"/>
    <property type="evidence" value="ECO:0000315"/>
    <property type="project" value="MGI"/>
</dbReference>
<dbReference type="GO" id="GO:0045577">
    <property type="term" value="P:regulation of B cell differentiation"/>
    <property type="evidence" value="ECO:0000315"/>
    <property type="project" value="MGI"/>
</dbReference>
<dbReference type="GO" id="GO:0022407">
    <property type="term" value="P:regulation of cell-cell adhesion"/>
    <property type="evidence" value="ECO:0000314"/>
    <property type="project" value="MGI"/>
</dbReference>
<dbReference type="GO" id="GO:0033632">
    <property type="term" value="P:regulation of cell-cell adhesion mediated by integrin"/>
    <property type="evidence" value="ECO:0000314"/>
    <property type="project" value="MGI"/>
</dbReference>
<dbReference type="GO" id="GO:0001959">
    <property type="term" value="P:regulation of cytokine-mediated signaling pathway"/>
    <property type="evidence" value="ECO:0000315"/>
    <property type="project" value="UniProtKB"/>
</dbReference>
<dbReference type="GO" id="GO:0043408">
    <property type="term" value="P:regulation of MAPK cascade"/>
    <property type="evidence" value="ECO:0000250"/>
    <property type="project" value="UniProtKB"/>
</dbReference>
<dbReference type="GO" id="GO:0045730">
    <property type="term" value="P:respiratory burst"/>
    <property type="evidence" value="ECO:0000250"/>
    <property type="project" value="UniProtKB"/>
</dbReference>
<dbReference type="GO" id="GO:0043627">
    <property type="term" value="P:response to estrogen"/>
    <property type="evidence" value="ECO:0000250"/>
    <property type="project" value="UniProtKB"/>
</dbReference>
<dbReference type="GO" id="GO:0001666">
    <property type="term" value="P:response to hypoxia"/>
    <property type="evidence" value="ECO:0000250"/>
    <property type="project" value="UniProtKB"/>
</dbReference>
<dbReference type="GO" id="GO:0002237">
    <property type="term" value="P:response to molecule of bacterial origin"/>
    <property type="evidence" value="ECO:0000314"/>
    <property type="project" value="UniProtKB"/>
</dbReference>
<dbReference type="GO" id="GO:0048488">
    <property type="term" value="P:synaptic vesicle endocytosis"/>
    <property type="evidence" value="ECO:0000315"/>
    <property type="project" value="MGI"/>
</dbReference>
<dbReference type="GO" id="GO:0031295">
    <property type="term" value="P:T cell costimulation"/>
    <property type="evidence" value="ECO:0000250"/>
    <property type="project" value="UniProtKB"/>
</dbReference>
<dbReference type="GO" id="GO:0001777">
    <property type="term" value="P:T cell homeostatic proliferation"/>
    <property type="evidence" value="ECO:0000315"/>
    <property type="project" value="MGI"/>
</dbReference>
<dbReference type="InterPro" id="IPR028029">
    <property type="entry name" value="CD24"/>
</dbReference>
<dbReference type="PANTHER" id="PTHR16676">
    <property type="entry name" value="SIGNAL TRANSDUCER CD24"/>
    <property type="match status" value="1"/>
</dbReference>
<dbReference type="PANTHER" id="PTHR16676:SF0">
    <property type="entry name" value="SIGNAL TRANSDUCER CD24"/>
    <property type="match status" value="1"/>
</dbReference>
<dbReference type="Pfam" id="PF14984">
    <property type="entry name" value="CD24"/>
    <property type="match status" value="1"/>
</dbReference>
<sequence>MGRAMVARLGLGLLLLALLLPTQIYCNQTSVAPFPGNQNISASPNPSNATTRGGGSSLQSTAGLLALSLSLLHLYC</sequence>
<accession>P24807</accession>
<accession>P26691</accession>
<protein>
    <recommendedName>
        <fullName>Signal transducer CD24</fullName>
    </recommendedName>
    <alternativeName>
        <fullName>Lymphocyte antigen 52</fullName>
        <shortName>Ly-52</shortName>
    </alternativeName>
    <alternativeName>
        <fullName>M1/69-J11D heat stable antigen</fullName>
        <shortName>HSA</shortName>
    </alternativeName>
    <alternativeName>
        <fullName>Nectadrin</fullName>
    </alternativeName>
    <alternativeName>
        <fullName>R13-Ag</fullName>
    </alternativeName>
    <alternativeName>
        <fullName>X62 heat stable antigen</fullName>
    </alternativeName>
    <cdAntigenName>CD24</cdAntigenName>
</protein>
<proteinExistence type="evidence at protein level"/>
<keyword id="KW-1003">Cell membrane</keyword>
<keyword id="KW-0903">Direct protein sequencing</keyword>
<keyword id="KW-0325">Glycoprotein</keyword>
<keyword id="KW-0336">GPI-anchor</keyword>
<keyword id="KW-0391">Immunity</keyword>
<keyword id="KW-0399">Innate immunity</keyword>
<keyword id="KW-0449">Lipoprotein</keyword>
<keyword id="KW-0472">Membrane</keyword>
<keyword id="KW-1185">Reference proteome</keyword>
<keyword id="KW-0732">Signal</keyword>